<name>LSPA_YERPA</name>
<organism>
    <name type="scientific">Yersinia pestis bv. Antiqua (strain Antiqua)</name>
    <dbReference type="NCBI Taxonomy" id="360102"/>
    <lineage>
        <taxon>Bacteria</taxon>
        <taxon>Pseudomonadati</taxon>
        <taxon>Pseudomonadota</taxon>
        <taxon>Gammaproteobacteria</taxon>
        <taxon>Enterobacterales</taxon>
        <taxon>Yersiniaceae</taxon>
        <taxon>Yersinia</taxon>
    </lineage>
</organism>
<dbReference type="EC" id="3.4.23.36" evidence="1"/>
<dbReference type="EMBL" id="CP000308">
    <property type="protein sequence ID" value="ABG16030.1"/>
    <property type="molecule type" value="Genomic_DNA"/>
</dbReference>
<dbReference type="RefSeq" id="WP_002210508.1">
    <property type="nucleotide sequence ID" value="NZ_CP009906.1"/>
</dbReference>
<dbReference type="SMR" id="Q1C0J2"/>
<dbReference type="MEROPS" id="A08.001"/>
<dbReference type="GeneID" id="57974134"/>
<dbReference type="KEGG" id="ypa:YPA_4069"/>
<dbReference type="UniPathway" id="UPA00665"/>
<dbReference type="Proteomes" id="UP000001971">
    <property type="component" value="Chromosome"/>
</dbReference>
<dbReference type="GO" id="GO:0005886">
    <property type="term" value="C:plasma membrane"/>
    <property type="evidence" value="ECO:0007669"/>
    <property type="project" value="UniProtKB-SubCell"/>
</dbReference>
<dbReference type="GO" id="GO:0004190">
    <property type="term" value="F:aspartic-type endopeptidase activity"/>
    <property type="evidence" value="ECO:0007669"/>
    <property type="project" value="UniProtKB-UniRule"/>
</dbReference>
<dbReference type="GO" id="GO:0006508">
    <property type="term" value="P:proteolysis"/>
    <property type="evidence" value="ECO:0007669"/>
    <property type="project" value="UniProtKB-KW"/>
</dbReference>
<dbReference type="HAMAP" id="MF_00161">
    <property type="entry name" value="LspA"/>
    <property type="match status" value="1"/>
</dbReference>
<dbReference type="InterPro" id="IPR001872">
    <property type="entry name" value="Peptidase_A8"/>
</dbReference>
<dbReference type="NCBIfam" id="TIGR00077">
    <property type="entry name" value="lspA"/>
    <property type="match status" value="1"/>
</dbReference>
<dbReference type="PANTHER" id="PTHR33695">
    <property type="entry name" value="LIPOPROTEIN SIGNAL PEPTIDASE"/>
    <property type="match status" value="1"/>
</dbReference>
<dbReference type="PANTHER" id="PTHR33695:SF1">
    <property type="entry name" value="LIPOPROTEIN SIGNAL PEPTIDASE"/>
    <property type="match status" value="1"/>
</dbReference>
<dbReference type="Pfam" id="PF01252">
    <property type="entry name" value="Peptidase_A8"/>
    <property type="match status" value="1"/>
</dbReference>
<dbReference type="PRINTS" id="PR00781">
    <property type="entry name" value="LIPOSIGPTASE"/>
</dbReference>
<dbReference type="PROSITE" id="PS00855">
    <property type="entry name" value="SPASE_II"/>
    <property type="match status" value="1"/>
</dbReference>
<proteinExistence type="inferred from homology"/>
<comment type="function">
    <text evidence="1">This protein specifically catalyzes the removal of signal peptides from prolipoproteins.</text>
</comment>
<comment type="catalytic activity">
    <reaction evidence="1">
        <text>Release of signal peptides from bacterial membrane prolipoproteins. Hydrolyzes -Xaa-Yaa-Zaa-|-(S,diacylglyceryl)Cys-, in which Xaa is hydrophobic (preferably Leu), and Yaa (Ala or Ser) and Zaa (Gly or Ala) have small, neutral side chains.</text>
        <dbReference type="EC" id="3.4.23.36"/>
    </reaction>
</comment>
<comment type="pathway">
    <text evidence="1">Protein modification; lipoprotein biosynthesis (signal peptide cleavage).</text>
</comment>
<comment type="subcellular location">
    <subcellularLocation>
        <location evidence="1">Cell inner membrane</location>
        <topology evidence="1">Multi-pass membrane protein</topology>
    </subcellularLocation>
</comment>
<comment type="similarity">
    <text evidence="1">Belongs to the peptidase A8 family.</text>
</comment>
<reference key="1">
    <citation type="journal article" date="2006" name="J. Bacteriol.">
        <title>Complete genome sequence of Yersinia pestis strains Antiqua and Nepal516: evidence of gene reduction in an emerging pathogen.</title>
        <authorList>
            <person name="Chain P.S.G."/>
            <person name="Hu P."/>
            <person name="Malfatti S.A."/>
            <person name="Radnedge L."/>
            <person name="Larimer F."/>
            <person name="Vergez L.M."/>
            <person name="Worsham P."/>
            <person name="Chu M.C."/>
            <person name="Andersen G.L."/>
        </authorList>
    </citation>
    <scope>NUCLEOTIDE SEQUENCE [LARGE SCALE GENOMIC DNA]</scope>
    <source>
        <strain>Antiqua</strain>
    </source>
</reference>
<accession>Q1C0J2</accession>
<protein>
    <recommendedName>
        <fullName evidence="1">Lipoprotein signal peptidase</fullName>
        <ecNumber evidence="1">3.4.23.36</ecNumber>
    </recommendedName>
    <alternativeName>
        <fullName evidence="1">Prolipoprotein signal peptidase</fullName>
    </alternativeName>
    <alternativeName>
        <fullName evidence="1">Signal peptidase II</fullName>
        <shortName evidence="1">SPase II</shortName>
    </alternativeName>
</protein>
<evidence type="ECO:0000255" key="1">
    <source>
        <dbReference type="HAMAP-Rule" id="MF_00161"/>
    </source>
</evidence>
<feature type="chain" id="PRO_0000289465" description="Lipoprotein signal peptidase">
    <location>
        <begin position="1"/>
        <end position="169"/>
    </location>
</feature>
<feature type="transmembrane region" description="Helical" evidence="1">
    <location>
        <begin position="4"/>
        <end position="24"/>
    </location>
</feature>
<feature type="transmembrane region" description="Helical" evidence="1">
    <location>
        <begin position="29"/>
        <end position="49"/>
    </location>
</feature>
<feature type="transmembrane region" description="Helical" evidence="1">
    <location>
        <begin position="70"/>
        <end position="90"/>
    </location>
</feature>
<feature type="transmembrane region" description="Helical" evidence="1">
    <location>
        <begin position="101"/>
        <end position="121"/>
    </location>
</feature>
<feature type="transmembrane region" description="Helical" evidence="1">
    <location>
        <begin position="137"/>
        <end position="157"/>
    </location>
</feature>
<feature type="active site" evidence="1">
    <location>
        <position position="123"/>
    </location>
</feature>
<feature type="active site" evidence="1">
    <location>
        <position position="141"/>
    </location>
</feature>
<sequence>MNKPICSTGLRWLWLAVVVVILDISSKQWVMAHFALYESVPLIPFFNLTYAQNFGAAFSFLADKSGWQRWFFAGIAIGISVVLMVMMYRSTAKQRLINCAYALIIGGALGNLYDRLVHGAVNDFLDFYINNWHFPTFNLADVAICIGAALVIFEGFLSPVEKNAVNNDE</sequence>
<gene>
    <name evidence="1" type="primary">lspA</name>
    <name type="ordered locus">YPA_4069</name>
</gene>
<keyword id="KW-0064">Aspartyl protease</keyword>
<keyword id="KW-0997">Cell inner membrane</keyword>
<keyword id="KW-1003">Cell membrane</keyword>
<keyword id="KW-0378">Hydrolase</keyword>
<keyword id="KW-0472">Membrane</keyword>
<keyword id="KW-0645">Protease</keyword>
<keyword id="KW-0812">Transmembrane</keyword>
<keyword id="KW-1133">Transmembrane helix</keyword>